<proteinExistence type="evidence at protein level"/>
<accession>P31503</accession>
<accession>Q62719</accession>
<accession>Q63387</accession>
<gene>
    <name type="primary">Pou2f1</name>
    <name type="synonym">Oct-1</name>
    <name type="synonym">Otf-1</name>
    <name type="synonym">Otf1</name>
</gene>
<feature type="chain" id="PRO_0000100711" description="POU domain, class 2, transcription factor 1">
    <location>
        <begin position="1" status="less than"/>
        <end position="632"/>
    </location>
</feature>
<feature type="domain" description="POU-specific" evidence="4">
    <location>
        <begin position="167"/>
        <end position="241"/>
    </location>
</feature>
<feature type="DNA-binding region" description="Homeobox" evidence="3">
    <location>
        <begin position="268"/>
        <end position="327"/>
    </location>
</feature>
<feature type="region of interest" description="Disordered" evidence="5">
    <location>
        <begin position="243"/>
        <end position="273"/>
    </location>
</feature>
<feature type="region of interest" description="Disordered" evidence="5">
    <location>
        <begin position="385"/>
        <end position="448"/>
    </location>
</feature>
<feature type="compositionally biased region" description="Low complexity" evidence="5">
    <location>
        <begin position="243"/>
        <end position="258"/>
    </location>
</feature>
<feature type="compositionally biased region" description="Low complexity" evidence="5">
    <location>
        <begin position="394"/>
        <end position="441"/>
    </location>
</feature>
<feature type="modified residue" description="Phosphothreonine" evidence="2">
    <location>
        <position position="157"/>
    </location>
</feature>
<feature type="modified residue" description="Phosphothreonine" evidence="2">
    <location>
        <position position="163"/>
    </location>
</feature>
<feature type="modified residue" description="Phosphoserine" evidence="2">
    <location>
        <position position="170"/>
    </location>
</feature>
<feature type="modified residue" description="Phosphoserine" evidence="2">
    <location>
        <position position="274"/>
    </location>
</feature>
<feature type="modified residue" description="Phosphoserine" evidence="2">
    <location>
        <position position="337"/>
    </location>
</feature>
<feature type="sequence conflict" description="In Ref. 3; CAA42059." evidence="7" ref="3">
    <original>A</original>
    <variation>S</variation>
    <location>
        <position position="218"/>
    </location>
</feature>
<feature type="sequence conflict" description="In Ref. 3; CAA42059." evidence="7" ref="3">
    <original>K</original>
    <variation>S</variation>
    <location>
        <position position="235"/>
    </location>
</feature>
<feature type="sequence conflict" description="In Ref. 3; CAA42059." evidence="7" ref="3">
    <original>S</original>
    <variation>L</variation>
    <location>
        <position position="251"/>
    </location>
</feature>
<feature type="sequence conflict" description="In Ref. 3; CAA42059." evidence="7" ref="3">
    <original>R</original>
    <variation>S</variation>
    <location>
        <position position="269"/>
    </location>
</feature>
<feature type="sequence conflict" description="In Ref. 3; CAA42059." evidence="7" ref="3">
    <original>VA</original>
    <variation>WS</variation>
    <location>
        <begin position="281"/>
        <end position="282"/>
    </location>
</feature>
<feature type="non-terminal residue">
    <location>
        <position position="1"/>
    </location>
</feature>
<name>PO2F1_RAT</name>
<reference key="1">
    <citation type="submission" date="1994-11" db="EMBL/GenBank/DDBJ databases">
        <title>Identification of a muscle creatine kinase enhancer A/T-rich site binding factor as Oct-1.</title>
        <authorList>
            <person name="Amacher S.L."/>
            <person name="Buskin J.N."/>
            <person name="Hauschka S.D."/>
        </authorList>
    </citation>
    <scope>NUCLEOTIDE SEQUENCE [MRNA]</scope>
    <source>
        <strain>Sprague-Dawley</strain>
        <tissue>Heart muscle</tissue>
    </source>
</reference>
<reference key="2">
    <citation type="journal article" date="1993" name="Biochim. Biophys. Acta">
        <title>The POU-domain protein Oct-1 is widely expressed in adult rat organs.</title>
        <authorList>
            <person name="Kambe F."/>
            <person name="Tsukahara S."/>
            <person name="Kato T."/>
            <person name="Seo H."/>
        </authorList>
    </citation>
    <scope>NUCLEOTIDE SEQUENCE [MRNA] OF 172-325</scope>
    <scope>TISSUE SPECIFICITY</scope>
</reference>
<reference key="3">
    <citation type="journal article" date="1991" name="Nucleic Acids Res.">
        <title>Cloning and sequencing of the rat Oct-1 POU box.</title>
        <authorList>
            <person name="Lillycrop K.A."/>
            <person name="Latchman D.S."/>
        </authorList>
    </citation>
    <scope>NUCLEOTIDE SEQUENCE [MRNA] OF 194-313</scope>
    <source>
        <tissue>Spinal ganglion</tissue>
    </source>
</reference>
<reference key="4">
    <citation type="journal article" date="2012" name="Nat. Commun.">
        <title>Quantitative maps of protein phosphorylation sites across 14 different rat organs and tissues.</title>
        <authorList>
            <person name="Lundby A."/>
            <person name="Secher A."/>
            <person name="Lage K."/>
            <person name="Nordsborg N.B."/>
            <person name="Dmytriyev A."/>
            <person name="Lundby C."/>
            <person name="Olsen J.V."/>
        </authorList>
    </citation>
    <scope>IDENTIFICATION BY MASS SPECTROMETRY [LARGE SCALE ANALYSIS]</scope>
</reference>
<keyword id="KW-0010">Activator</keyword>
<keyword id="KW-0238">DNA-binding</keyword>
<keyword id="KW-0371">Homeobox</keyword>
<keyword id="KW-0539">Nucleus</keyword>
<keyword id="KW-0597">Phosphoprotein</keyword>
<keyword id="KW-1185">Reference proteome</keyword>
<keyword id="KW-0804">Transcription</keyword>
<keyword id="KW-0805">Transcription regulation</keyword>
<dbReference type="EMBL" id="U17013">
    <property type="protein sequence ID" value="AAA53185.1"/>
    <property type="molecule type" value="mRNA"/>
</dbReference>
<dbReference type="EMBL" id="D12978">
    <property type="protein sequence ID" value="BAA02355.1"/>
    <property type="molecule type" value="mRNA"/>
</dbReference>
<dbReference type="EMBL" id="X59429">
    <property type="protein sequence ID" value="CAA42059.1"/>
    <property type="molecule type" value="mRNA"/>
</dbReference>
<dbReference type="PIR" id="S16445">
    <property type="entry name" value="S16445"/>
</dbReference>
<dbReference type="PIR" id="S28181">
    <property type="entry name" value="S28181"/>
</dbReference>
<dbReference type="RefSeq" id="NP_001094109.1">
    <property type="nucleotide sequence ID" value="NM_001100639.1"/>
</dbReference>
<dbReference type="SMR" id="P31503"/>
<dbReference type="CORUM" id="P31503"/>
<dbReference type="FunCoup" id="P31503">
    <property type="interactions" value="1993"/>
</dbReference>
<dbReference type="STRING" id="10116.ENSRNOP00000044416"/>
<dbReference type="PaxDb" id="10116-ENSRNOP00000044416"/>
<dbReference type="PeptideAtlas" id="P31503"/>
<dbReference type="GeneID" id="171068"/>
<dbReference type="KEGG" id="rno:171068"/>
<dbReference type="UCSC" id="RGD:621689">
    <property type="organism name" value="rat"/>
</dbReference>
<dbReference type="AGR" id="RGD:621689"/>
<dbReference type="CTD" id="5451"/>
<dbReference type="RGD" id="621689">
    <property type="gene designation" value="Pou2f1"/>
</dbReference>
<dbReference type="eggNOG" id="KOG3802">
    <property type="taxonomic scope" value="Eukaryota"/>
</dbReference>
<dbReference type="InParanoid" id="P31503"/>
<dbReference type="OrthoDB" id="91678at9989"/>
<dbReference type="Reactome" id="R-RNO-6807505">
    <property type="pathway name" value="RNA polymerase II transcribes snRNA genes"/>
</dbReference>
<dbReference type="Reactome" id="R-RNO-76071">
    <property type="pathway name" value="RNA Polymerase III Transcription Initiation From Type 3 Promoter"/>
</dbReference>
<dbReference type="Reactome" id="R-RNO-9018519">
    <property type="pathway name" value="Estrogen-dependent gene expression"/>
</dbReference>
<dbReference type="Proteomes" id="UP000002494">
    <property type="component" value="Unplaced"/>
</dbReference>
<dbReference type="GO" id="GO:0005634">
    <property type="term" value="C:nucleus"/>
    <property type="evidence" value="ECO:0000266"/>
    <property type="project" value="RGD"/>
</dbReference>
<dbReference type="GO" id="GO:0090575">
    <property type="term" value="C:RNA polymerase II transcription regulator complex"/>
    <property type="evidence" value="ECO:0000266"/>
    <property type="project" value="RGD"/>
</dbReference>
<dbReference type="GO" id="GO:0005667">
    <property type="term" value="C:transcription regulator complex"/>
    <property type="evidence" value="ECO:0000266"/>
    <property type="project" value="RGD"/>
</dbReference>
<dbReference type="GO" id="GO:0003682">
    <property type="term" value="F:chromatin binding"/>
    <property type="evidence" value="ECO:0000314"/>
    <property type="project" value="RGD"/>
</dbReference>
<dbReference type="GO" id="GO:0003677">
    <property type="term" value="F:DNA binding"/>
    <property type="evidence" value="ECO:0000266"/>
    <property type="project" value="RGD"/>
</dbReference>
<dbReference type="GO" id="GO:0000981">
    <property type="term" value="F:DNA-binding transcription factor activity, RNA polymerase II-specific"/>
    <property type="evidence" value="ECO:0000266"/>
    <property type="project" value="RGD"/>
</dbReference>
<dbReference type="GO" id="GO:0000978">
    <property type="term" value="F:RNA polymerase II cis-regulatory region sequence-specific DNA binding"/>
    <property type="evidence" value="ECO:0000266"/>
    <property type="project" value="RGD"/>
</dbReference>
<dbReference type="GO" id="GO:0000979">
    <property type="term" value="F:RNA polymerase II core promoter sequence-specific DNA binding"/>
    <property type="evidence" value="ECO:0000266"/>
    <property type="project" value="RGD"/>
</dbReference>
<dbReference type="GO" id="GO:0043565">
    <property type="term" value="F:sequence-specific DNA binding"/>
    <property type="evidence" value="ECO:0000266"/>
    <property type="project" value="RGD"/>
</dbReference>
<dbReference type="GO" id="GO:0005102">
    <property type="term" value="F:signaling receptor binding"/>
    <property type="evidence" value="ECO:0000353"/>
    <property type="project" value="RGD"/>
</dbReference>
<dbReference type="GO" id="GO:0000976">
    <property type="term" value="F:transcription cis-regulatory region binding"/>
    <property type="evidence" value="ECO:0000314"/>
    <property type="project" value="RGD"/>
</dbReference>
<dbReference type="GO" id="GO:0060235">
    <property type="term" value="P:lens induction in camera-type eye"/>
    <property type="evidence" value="ECO:0000266"/>
    <property type="project" value="RGD"/>
</dbReference>
<dbReference type="GO" id="GO:0097421">
    <property type="term" value="P:liver regeneration"/>
    <property type="evidence" value="ECO:0000270"/>
    <property type="project" value="RGD"/>
</dbReference>
<dbReference type="GO" id="GO:0045892">
    <property type="term" value="P:negative regulation of DNA-templated transcription"/>
    <property type="evidence" value="ECO:0000266"/>
    <property type="project" value="RGD"/>
</dbReference>
<dbReference type="GO" id="GO:1902894">
    <property type="term" value="P:negative regulation of miRNA transcription"/>
    <property type="evidence" value="ECO:0000315"/>
    <property type="project" value="BHF-UCL"/>
</dbReference>
<dbReference type="GO" id="GO:0030910">
    <property type="term" value="P:olfactory placode formation"/>
    <property type="evidence" value="ECO:0000266"/>
    <property type="project" value="RGD"/>
</dbReference>
<dbReference type="GO" id="GO:0045944">
    <property type="term" value="P:positive regulation of transcription by RNA polymerase II"/>
    <property type="evidence" value="ECO:0000266"/>
    <property type="project" value="RGD"/>
</dbReference>
<dbReference type="GO" id="GO:0006357">
    <property type="term" value="P:regulation of transcription by RNA polymerase II"/>
    <property type="evidence" value="ECO:0000318"/>
    <property type="project" value="GO_Central"/>
</dbReference>
<dbReference type="GO" id="GO:0006366">
    <property type="term" value="P:transcription by RNA polymerase II"/>
    <property type="evidence" value="ECO:0000266"/>
    <property type="project" value="RGD"/>
</dbReference>
<dbReference type="CDD" id="cd00086">
    <property type="entry name" value="homeodomain"/>
    <property type="match status" value="1"/>
</dbReference>
<dbReference type="FunFam" id="1.10.10.60:FF:000005">
    <property type="entry name" value="POU domain protein"/>
    <property type="match status" value="1"/>
</dbReference>
<dbReference type="FunFam" id="1.10.260.40:FF:000001">
    <property type="entry name" value="POU domain protein"/>
    <property type="match status" value="1"/>
</dbReference>
<dbReference type="Gene3D" id="1.10.10.60">
    <property type="entry name" value="Homeodomain-like"/>
    <property type="match status" value="1"/>
</dbReference>
<dbReference type="Gene3D" id="1.10.260.40">
    <property type="entry name" value="lambda repressor-like DNA-binding domains"/>
    <property type="match status" value="1"/>
</dbReference>
<dbReference type="InterPro" id="IPR001356">
    <property type="entry name" value="HD"/>
</dbReference>
<dbReference type="InterPro" id="IPR017970">
    <property type="entry name" value="Homeobox_CS"/>
</dbReference>
<dbReference type="InterPro" id="IPR009057">
    <property type="entry name" value="Homeodomain-like_sf"/>
</dbReference>
<dbReference type="InterPro" id="IPR010982">
    <property type="entry name" value="Lambda_DNA-bd_dom_sf"/>
</dbReference>
<dbReference type="InterPro" id="IPR013847">
    <property type="entry name" value="POU"/>
</dbReference>
<dbReference type="InterPro" id="IPR045703">
    <property type="entry name" value="POU2F1_C"/>
</dbReference>
<dbReference type="InterPro" id="IPR000327">
    <property type="entry name" value="POU_dom"/>
</dbReference>
<dbReference type="InterPro" id="IPR050255">
    <property type="entry name" value="POU_domain_TF"/>
</dbReference>
<dbReference type="InterPro" id="IPR000972">
    <property type="entry name" value="TF_octamer"/>
</dbReference>
<dbReference type="PANTHER" id="PTHR11636">
    <property type="entry name" value="POU DOMAIN"/>
    <property type="match status" value="1"/>
</dbReference>
<dbReference type="PANTHER" id="PTHR11636:SF47">
    <property type="entry name" value="POU DOMAIN, CLASS 2, TRANSCRIPTION FACTOR 1"/>
    <property type="match status" value="1"/>
</dbReference>
<dbReference type="Pfam" id="PF00046">
    <property type="entry name" value="Homeodomain"/>
    <property type="match status" value="1"/>
</dbReference>
<dbReference type="Pfam" id="PF00157">
    <property type="entry name" value="Pou"/>
    <property type="match status" value="1"/>
</dbReference>
<dbReference type="Pfam" id="PF19536">
    <property type="entry name" value="POU2F1_C"/>
    <property type="match status" value="1"/>
</dbReference>
<dbReference type="PRINTS" id="PR00029">
    <property type="entry name" value="OCTAMER"/>
</dbReference>
<dbReference type="PRINTS" id="PR00028">
    <property type="entry name" value="POUDOMAIN"/>
</dbReference>
<dbReference type="SMART" id="SM00389">
    <property type="entry name" value="HOX"/>
    <property type="match status" value="1"/>
</dbReference>
<dbReference type="SMART" id="SM00352">
    <property type="entry name" value="POU"/>
    <property type="match status" value="1"/>
</dbReference>
<dbReference type="SUPFAM" id="SSF46689">
    <property type="entry name" value="Homeodomain-like"/>
    <property type="match status" value="1"/>
</dbReference>
<dbReference type="SUPFAM" id="SSF47413">
    <property type="entry name" value="lambda repressor-like DNA-binding domains"/>
    <property type="match status" value="1"/>
</dbReference>
<dbReference type="PROSITE" id="PS00027">
    <property type="entry name" value="HOMEOBOX_1"/>
    <property type="match status" value="1"/>
</dbReference>
<dbReference type="PROSITE" id="PS50071">
    <property type="entry name" value="HOMEOBOX_2"/>
    <property type="match status" value="1"/>
</dbReference>
<dbReference type="PROSITE" id="PS00035">
    <property type="entry name" value="POU_1"/>
    <property type="match status" value="1"/>
</dbReference>
<dbReference type="PROSITE" id="PS00465">
    <property type="entry name" value="POU_2"/>
    <property type="match status" value="1"/>
</dbReference>
<dbReference type="PROSITE" id="PS51179">
    <property type="entry name" value="POU_3"/>
    <property type="match status" value="1"/>
</dbReference>
<protein>
    <recommendedName>
        <fullName>POU domain, class 2, transcription factor 1</fullName>
    </recommendedName>
    <alternativeName>
        <fullName>NF-A1</fullName>
    </alternativeName>
    <alternativeName>
        <fullName>Octamer-binding protein 1</fullName>
        <shortName>Oct-1</shortName>
    </alternativeName>
    <alternativeName>
        <fullName>Octamer-binding transcription factor 1</fullName>
        <shortName>OTF-1</shortName>
    </alternativeName>
</protein>
<comment type="function">
    <text evidence="2">Transcription factor that binds to the octamer motif (5'-ATTTGCAT-3') and activates the promoters of the genes for some small nuclear RNAs (snRNA) and of genes such as those for histone H2B and immunoglobulins. Modulates transcription transactivation by NR3C1, AR and PGR.</text>
</comment>
<comment type="subunit">
    <text evidence="2">Interacts with POU2AF1; the interaction increases POU2F1 transactivation activity. Interacts with NR3C1, AR, PGR and HCFC1.</text>
</comment>
<comment type="subcellular location">
    <subcellularLocation>
        <location>Nucleus</location>
    </subcellularLocation>
</comment>
<comment type="tissue specificity">
    <text evidence="6">Widely expressed.</text>
</comment>
<comment type="PTM">
    <text evidence="1">Phosphorylated by PRKDC.</text>
</comment>
<comment type="similarity">
    <text evidence="7">Belongs to the POU transcription factor family. Class-2 subfamily.</text>
</comment>
<organism>
    <name type="scientific">Rattus norvegicus</name>
    <name type="common">Rat</name>
    <dbReference type="NCBI Taxonomy" id="10116"/>
    <lineage>
        <taxon>Eukaryota</taxon>
        <taxon>Metazoa</taxon>
        <taxon>Chordata</taxon>
        <taxon>Craniata</taxon>
        <taxon>Vertebrata</taxon>
        <taxon>Euteleostomi</taxon>
        <taxon>Mammalia</taxon>
        <taxon>Eutheria</taxon>
        <taxon>Euarchontoglires</taxon>
        <taxon>Glires</taxon>
        <taxon>Rodentia</taxon>
        <taxon>Myomorpha</taxon>
        <taxon>Muroidea</taxon>
        <taxon>Muridae</taxon>
        <taxon>Murinae</taxon>
        <taxon>Rattus</taxon>
    </lineage>
</organism>
<sequence length="632" mass="65170">LTPAQQQLLLQQAQAQAQLLAAAVQQHSASQQHSAAGATISASAATPMTQIPLSQPIQIAQDLQQLQQLQQQNLNLQQFVLVHPTTNLQPAQFIISQTPQGQQGLLQAQNLLTQLPQQSQANLLQPQPSITLTSQPTTPTRTIAATPIQTLPQSQTTPKRIDTPSLEEPSDLEELEQFAKTFKQRRIKLGFTQGDVGLAMGKLYGNDFSQTTISRFEALNLSFKNMCKLKPLLEKWLNDAENLSSDSTASSPSALNSPGLGAEGLNRRRKKRTSIETNIRVALEKSFMENQKPTSEDITLIAEQLNMEKEVIRVWFCNRRQKEKRINPPSSGGTSSSPIKAIFPSPTSLVATTPSLVTSSTATTLTVNPVLPLTSAAMTNLSLTGTTDSTSNNTATVISTAPPASSAVTSPSLSPSPSASASTSEASSASETSTTQTTSTPLPSPLGASQVMVTASGLQTAAAAALQGAAQLPANASLAAMAAAAGLNPGLMAPSQFAAGGALLSLNPGTLGGALSPALMSNSTLATIQALASSGSLPITSLDATGNLVFANAGGAPNIVTAPLFLNPQNLSLLTSNPVSLVSAAAASTGNSAPTASLHASSTSTESIQNSLFTVASASGAASTTTAASKAQ</sequence>
<evidence type="ECO:0000250" key="1"/>
<evidence type="ECO:0000250" key="2">
    <source>
        <dbReference type="UniProtKB" id="P14859"/>
    </source>
</evidence>
<evidence type="ECO:0000255" key="3">
    <source>
        <dbReference type="PROSITE-ProRule" id="PRU00108"/>
    </source>
</evidence>
<evidence type="ECO:0000255" key="4">
    <source>
        <dbReference type="PROSITE-ProRule" id="PRU00530"/>
    </source>
</evidence>
<evidence type="ECO:0000256" key="5">
    <source>
        <dbReference type="SAM" id="MobiDB-lite"/>
    </source>
</evidence>
<evidence type="ECO:0000269" key="6">
    <source>
    </source>
</evidence>
<evidence type="ECO:0000305" key="7"/>